<name>BH055_ARATH</name>
<feature type="chain" id="PRO_0000358752" description="Transcription factor bHLH55">
    <location>
        <begin position="1"/>
        <end position="257"/>
    </location>
</feature>
<feature type="domain" description="bHLH" evidence="1">
    <location>
        <begin position="74"/>
        <end position="126"/>
    </location>
</feature>
<accession>Q9LN95</accession>
<accession>Q9LN89</accession>
<protein>
    <recommendedName>
        <fullName>Transcription factor bHLH55</fullName>
    </recommendedName>
    <alternativeName>
        <fullName>Basic helix-loop-helix protein 55</fullName>
        <shortName>AtbHLH55</shortName>
        <shortName>bHLH 55</shortName>
    </alternativeName>
    <alternativeName>
        <fullName>Transcription factor EN 1</fullName>
    </alternativeName>
    <alternativeName>
        <fullName>bHLH transcription factor bHLH055</fullName>
    </alternativeName>
</protein>
<sequence>MNFPDSSLFTPNFAYENDLDFSSLITPSTRVSFQEPKPCNPVIHSAGIENDGRQNCETTMTLSEIMKGDDEPKNKRAKHKELERQRRQENTSLFKILRYLLPSQYIKGKRSSADHVLEAVNYIKDLQKKIKEVSEKRDRIKRSITHPSSRGEFSIRSLASSTCSCVGDTNIAVVVRPCLIGLEIVVSCCNRHESCLSSVLQLLAQEQCFNIVSCISTRLHQGFIHTIASEVEEGIEVYFSELQEKIIKIGTSRVTTR</sequence>
<evidence type="ECO:0000255" key="1">
    <source>
        <dbReference type="PROSITE-ProRule" id="PRU00981"/>
    </source>
</evidence>
<evidence type="ECO:0000269" key="2">
    <source>
    </source>
</evidence>
<evidence type="ECO:0000305" key="3"/>
<reference key="1">
    <citation type="journal article" date="2000" name="Nature">
        <title>Sequence and analysis of chromosome 1 of the plant Arabidopsis thaliana.</title>
        <authorList>
            <person name="Theologis A."/>
            <person name="Ecker J.R."/>
            <person name="Palm C.J."/>
            <person name="Federspiel N.A."/>
            <person name="Kaul S."/>
            <person name="White O."/>
            <person name="Alonso J."/>
            <person name="Altafi H."/>
            <person name="Araujo R."/>
            <person name="Bowman C.L."/>
            <person name="Brooks S.Y."/>
            <person name="Buehler E."/>
            <person name="Chan A."/>
            <person name="Chao Q."/>
            <person name="Chen H."/>
            <person name="Cheuk R.F."/>
            <person name="Chin C.W."/>
            <person name="Chung M.K."/>
            <person name="Conn L."/>
            <person name="Conway A.B."/>
            <person name="Conway A.R."/>
            <person name="Creasy T.H."/>
            <person name="Dewar K."/>
            <person name="Dunn P."/>
            <person name="Etgu P."/>
            <person name="Feldblyum T.V."/>
            <person name="Feng J.-D."/>
            <person name="Fong B."/>
            <person name="Fujii C.Y."/>
            <person name="Gill J.E."/>
            <person name="Goldsmith A.D."/>
            <person name="Haas B."/>
            <person name="Hansen N.F."/>
            <person name="Hughes B."/>
            <person name="Huizar L."/>
            <person name="Hunter J.L."/>
            <person name="Jenkins J."/>
            <person name="Johnson-Hopson C."/>
            <person name="Khan S."/>
            <person name="Khaykin E."/>
            <person name="Kim C.J."/>
            <person name="Koo H.L."/>
            <person name="Kremenetskaia I."/>
            <person name="Kurtz D.B."/>
            <person name="Kwan A."/>
            <person name="Lam B."/>
            <person name="Langin-Hooper S."/>
            <person name="Lee A."/>
            <person name="Lee J.M."/>
            <person name="Lenz C.A."/>
            <person name="Li J.H."/>
            <person name="Li Y.-P."/>
            <person name="Lin X."/>
            <person name="Liu S.X."/>
            <person name="Liu Z.A."/>
            <person name="Luros J.S."/>
            <person name="Maiti R."/>
            <person name="Marziali A."/>
            <person name="Militscher J."/>
            <person name="Miranda M."/>
            <person name="Nguyen M."/>
            <person name="Nierman W.C."/>
            <person name="Osborne B.I."/>
            <person name="Pai G."/>
            <person name="Peterson J."/>
            <person name="Pham P.K."/>
            <person name="Rizzo M."/>
            <person name="Rooney T."/>
            <person name="Rowley D."/>
            <person name="Sakano H."/>
            <person name="Salzberg S.L."/>
            <person name="Schwartz J.R."/>
            <person name="Shinn P."/>
            <person name="Southwick A.M."/>
            <person name="Sun H."/>
            <person name="Tallon L.J."/>
            <person name="Tambunga G."/>
            <person name="Toriumi M.J."/>
            <person name="Town C.D."/>
            <person name="Utterback T."/>
            <person name="Van Aken S."/>
            <person name="Vaysberg M."/>
            <person name="Vysotskaia V.S."/>
            <person name="Walker M."/>
            <person name="Wu D."/>
            <person name="Yu G."/>
            <person name="Fraser C.M."/>
            <person name="Venter J.C."/>
            <person name="Davis R.W."/>
        </authorList>
    </citation>
    <scope>NUCLEOTIDE SEQUENCE [LARGE SCALE GENOMIC DNA]</scope>
    <source>
        <strain>cv. Columbia</strain>
    </source>
</reference>
<reference key="2">
    <citation type="journal article" date="2017" name="Plant J.">
        <title>Araport11: a complete reannotation of the Arabidopsis thaliana reference genome.</title>
        <authorList>
            <person name="Cheng C.Y."/>
            <person name="Krishnakumar V."/>
            <person name="Chan A.P."/>
            <person name="Thibaud-Nissen F."/>
            <person name="Schobel S."/>
            <person name="Town C.D."/>
        </authorList>
    </citation>
    <scope>GENOME REANNOTATION</scope>
    <source>
        <strain>cv. Columbia</strain>
    </source>
</reference>
<reference key="3">
    <citation type="journal article" date="2003" name="Mol. Biol. Evol.">
        <title>The basic helix-loop-helix transcription factor family in plants: a genome-wide study of protein structure and functional diversity.</title>
        <authorList>
            <person name="Heim M.A."/>
            <person name="Jakoby M."/>
            <person name="Werber M."/>
            <person name="Martin C."/>
            <person name="Weisshaar B."/>
            <person name="Bailey P.C."/>
        </authorList>
    </citation>
    <scope>NUCLEOTIDE SEQUENCE [MRNA] OF 75-257</scope>
    <scope>TISSUE SPECIFICITY</scope>
    <scope>INDUCTION BY SA</scope>
    <scope>GENE FAMILY</scope>
    <scope>NOMENCLATURE</scope>
    <source>
        <strain>cv. Columbia</strain>
        <tissue>Root</tissue>
    </source>
</reference>
<reference key="4">
    <citation type="journal article" date="2003" name="Plant Cell">
        <title>The Arabidopsis basic/helix-loop-helix transcription factor family.</title>
        <authorList>
            <person name="Toledo-Ortiz G."/>
            <person name="Huq E."/>
            <person name="Quail P.H."/>
        </authorList>
    </citation>
    <scope>GENE FAMILY</scope>
</reference>
<reference key="5">
    <citation type="journal article" date="2003" name="Plant Cell">
        <title>Update on the basic helix-loop-helix transcription factor gene family in Arabidopsis thaliana.</title>
        <authorList>
            <person name="Bailey P.C."/>
            <person name="Martin C."/>
            <person name="Toledo-Ortiz G."/>
            <person name="Quail P.H."/>
            <person name="Huq E."/>
            <person name="Heim M.A."/>
            <person name="Jakoby M."/>
            <person name="Werber M."/>
            <person name="Weisshaar B."/>
        </authorList>
    </citation>
    <scope>GENE FAMILY</scope>
    <scope>NOMENCLATURE</scope>
</reference>
<dbReference type="EMBL" id="AC025416">
    <property type="protein sequence ID" value="AAF79643.1"/>
    <property type="molecule type" value="Genomic_DNA"/>
</dbReference>
<dbReference type="EMBL" id="AC025417">
    <property type="protein sequence ID" value="AAF88076.1"/>
    <property type="status" value="ALT_SEQ"/>
    <property type="molecule type" value="Genomic_DNA"/>
</dbReference>
<dbReference type="EMBL" id="CP002684">
    <property type="protein sequence ID" value="AEE28895.1"/>
    <property type="molecule type" value="Genomic_DNA"/>
</dbReference>
<dbReference type="EMBL" id="AF488589">
    <property type="status" value="NOT_ANNOTATED_CDS"/>
    <property type="molecule type" value="mRNA"/>
</dbReference>
<dbReference type="PIR" id="E86259">
    <property type="entry name" value="E86259"/>
</dbReference>
<dbReference type="RefSeq" id="NP_172715.4">
    <property type="nucleotide sequence ID" value="NM_101125.5"/>
</dbReference>
<dbReference type="SMR" id="Q9LN95"/>
<dbReference type="FunCoup" id="Q9LN95">
    <property type="interactions" value="11"/>
</dbReference>
<dbReference type="STRING" id="3702.Q9LN95"/>
<dbReference type="PaxDb" id="3702-AT1G12540.1"/>
<dbReference type="EnsemblPlants" id="AT1G12540.1">
    <property type="protein sequence ID" value="AT1G12540.1"/>
    <property type="gene ID" value="AT1G12540"/>
</dbReference>
<dbReference type="GeneID" id="837810"/>
<dbReference type="Gramene" id="AT1G12540.1">
    <property type="protein sequence ID" value="AT1G12540.1"/>
    <property type="gene ID" value="AT1G12540"/>
</dbReference>
<dbReference type="KEGG" id="ath:AT1G12540"/>
<dbReference type="Araport" id="AT1G12540"/>
<dbReference type="TAIR" id="AT1G12540"/>
<dbReference type="eggNOG" id="ENOG502S1BU">
    <property type="taxonomic scope" value="Eukaryota"/>
</dbReference>
<dbReference type="HOGENOM" id="CLU_094733_0_0_1"/>
<dbReference type="InParanoid" id="Q9LN95"/>
<dbReference type="OMA" id="HVHEAVN"/>
<dbReference type="PhylomeDB" id="Q9LN95"/>
<dbReference type="PRO" id="PR:Q9LN95"/>
<dbReference type="Proteomes" id="UP000006548">
    <property type="component" value="Chromosome 1"/>
</dbReference>
<dbReference type="ExpressionAtlas" id="Q9LN95">
    <property type="expression patterns" value="baseline and differential"/>
</dbReference>
<dbReference type="GO" id="GO:0005634">
    <property type="term" value="C:nucleus"/>
    <property type="evidence" value="ECO:0007669"/>
    <property type="project" value="UniProtKB-SubCell"/>
</dbReference>
<dbReference type="GO" id="GO:0003677">
    <property type="term" value="F:DNA binding"/>
    <property type="evidence" value="ECO:0007669"/>
    <property type="project" value="UniProtKB-KW"/>
</dbReference>
<dbReference type="GO" id="GO:0003700">
    <property type="term" value="F:DNA-binding transcription factor activity"/>
    <property type="evidence" value="ECO:0000250"/>
    <property type="project" value="TAIR"/>
</dbReference>
<dbReference type="GO" id="GO:0046983">
    <property type="term" value="F:protein dimerization activity"/>
    <property type="evidence" value="ECO:0007669"/>
    <property type="project" value="InterPro"/>
</dbReference>
<dbReference type="GO" id="GO:0006357">
    <property type="term" value="P:regulation of transcription by RNA polymerase II"/>
    <property type="evidence" value="ECO:0007669"/>
    <property type="project" value="InterPro"/>
</dbReference>
<dbReference type="CDD" id="cd18914">
    <property type="entry name" value="bHLH_AtORG2_like"/>
    <property type="match status" value="1"/>
</dbReference>
<dbReference type="Gene3D" id="4.10.280.10">
    <property type="entry name" value="Helix-loop-helix DNA-binding domain"/>
    <property type="match status" value="1"/>
</dbReference>
<dbReference type="InterPro" id="IPR011598">
    <property type="entry name" value="bHLH_dom"/>
</dbReference>
<dbReference type="InterPro" id="IPR036638">
    <property type="entry name" value="HLH_DNA-bd_sf"/>
</dbReference>
<dbReference type="InterPro" id="IPR015660">
    <property type="entry name" value="MASH1/Ascl1a-like"/>
</dbReference>
<dbReference type="PANTHER" id="PTHR13935">
    <property type="entry name" value="ACHAETE-SCUTE TRANSCRIPTION FACTOR-RELATED"/>
    <property type="match status" value="1"/>
</dbReference>
<dbReference type="PANTHER" id="PTHR13935:SF110">
    <property type="entry name" value="TRANSCRIPTION FACTOR BHLH55"/>
    <property type="match status" value="1"/>
</dbReference>
<dbReference type="Pfam" id="PF00010">
    <property type="entry name" value="HLH"/>
    <property type="match status" value="1"/>
</dbReference>
<dbReference type="SMART" id="SM00353">
    <property type="entry name" value="HLH"/>
    <property type="match status" value="1"/>
</dbReference>
<dbReference type="SUPFAM" id="SSF47459">
    <property type="entry name" value="HLH, helix-loop-helix DNA-binding domain"/>
    <property type="match status" value="1"/>
</dbReference>
<dbReference type="PROSITE" id="PS50888">
    <property type="entry name" value="BHLH"/>
    <property type="match status" value="1"/>
</dbReference>
<keyword id="KW-0238">DNA-binding</keyword>
<keyword id="KW-0539">Nucleus</keyword>
<keyword id="KW-1185">Reference proteome</keyword>
<keyword id="KW-0804">Transcription</keyword>
<keyword id="KW-0805">Transcription regulation</keyword>
<gene>
    <name type="primary">BHLH55</name>
    <name type="synonym">EN1</name>
    <name type="ordered locus">At1g12540</name>
    <name type="ORF">F5O11.28</name>
    <name type="ORF">T12C24.8</name>
</gene>
<proteinExistence type="evidence at transcript level"/>
<organism>
    <name type="scientific">Arabidopsis thaliana</name>
    <name type="common">Mouse-ear cress</name>
    <dbReference type="NCBI Taxonomy" id="3702"/>
    <lineage>
        <taxon>Eukaryota</taxon>
        <taxon>Viridiplantae</taxon>
        <taxon>Streptophyta</taxon>
        <taxon>Embryophyta</taxon>
        <taxon>Tracheophyta</taxon>
        <taxon>Spermatophyta</taxon>
        <taxon>Magnoliopsida</taxon>
        <taxon>eudicotyledons</taxon>
        <taxon>Gunneridae</taxon>
        <taxon>Pentapetalae</taxon>
        <taxon>rosids</taxon>
        <taxon>malvids</taxon>
        <taxon>Brassicales</taxon>
        <taxon>Brassicaceae</taxon>
        <taxon>Camelineae</taxon>
        <taxon>Arabidopsis</taxon>
    </lineage>
</organism>
<comment type="subunit">
    <text evidence="3">Homodimer.</text>
</comment>
<comment type="subcellular location">
    <subcellularLocation>
        <location evidence="1">Nucleus</location>
    </subcellularLocation>
</comment>
<comment type="tissue specificity">
    <text evidence="2">Expressed in roots, leaves, stems, and flowers.</text>
</comment>
<comment type="induction">
    <text evidence="2">By salicylic acid (SA).</text>
</comment>
<comment type="sequence caution" evidence="3">
    <conflict type="erroneous gene model prediction">
        <sequence resource="EMBL-CDS" id="AAF88076"/>
    </conflict>
</comment>